<name>CYB_ANOQU</name>
<feature type="chain" id="PRO_0000060588" description="Cytochrome b">
    <location>
        <begin position="1"/>
        <end position="378"/>
    </location>
</feature>
<feature type="transmembrane region" description="Helical" evidence="2">
    <location>
        <begin position="34"/>
        <end position="54"/>
    </location>
</feature>
<feature type="transmembrane region" description="Helical" evidence="2">
    <location>
        <begin position="78"/>
        <end position="99"/>
    </location>
</feature>
<feature type="transmembrane region" description="Helical" evidence="2">
    <location>
        <begin position="114"/>
        <end position="134"/>
    </location>
</feature>
<feature type="transmembrane region" description="Helical" evidence="2">
    <location>
        <begin position="179"/>
        <end position="199"/>
    </location>
</feature>
<feature type="transmembrane region" description="Helical" evidence="2">
    <location>
        <begin position="227"/>
        <end position="247"/>
    </location>
</feature>
<feature type="transmembrane region" description="Helical" evidence="2">
    <location>
        <begin position="289"/>
        <end position="309"/>
    </location>
</feature>
<feature type="transmembrane region" description="Helical" evidence="2">
    <location>
        <begin position="321"/>
        <end position="341"/>
    </location>
</feature>
<feature type="transmembrane region" description="Helical" evidence="2">
    <location>
        <begin position="348"/>
        <end position="368"/>
    </location>
</feature>
<feature type="binding site" description="axial binding residue" evidence="2">
    <location>
        <position position="84"/>
    </location>
    <ligand>
        <name>heme b</name>
        <dbReference type="ChEBI" id="CHEBI:60344"/>
        <label>b562</label>
    </ligand>
    <ligandPart>
        <name>Fe</name>
        <dbReference type="ChEBI" id="CHEBI:18248"/>
    </ligandPart>
</feature>
<feature type="binding site" description="axial binding residue" evidence="2">
    <location>
        <position position="98"/>
    </location>
    <ligand>
        <name>heme b</name>
        <dbReference type="ChEBI" id="CHEBI:60344"/>
        <label>b566</label>
    </ligand>
    <ligandPart>
        <name>Fe</name>
        <dbReference type="ChEBI" id="CHEBI:18248"/>
    </ligandPart>
</feature>
<feature type="binding site" description="axial binding residue" evidence="2">
    <location>
        <position position="183"/>
    </location>
    <ligand>
        <name>heme b</name>
        <dbReference type="ChEBI" id="CHEBI:60344"/>
        <label>b562</label>
    </ligand>
    <ligandPart>
        <name>Fe</name>
        <dbReference type="ChEBI" id="CHEBI:18248"/>
    </ligandPart>
</feature>
<feature type="binding site" description="axial binding residue" evidence="2">
    <location>
        <position position="197"/>
    </location>
    <ligand>
        <name>heme b</name>
        <dbReference type="ChEBI" id="CHEBI:60344"/>
        <label>b566</label>
    </ligand>
    <ligandPart>
        <name>Fe</name>
        <dbReference type="ChEBI" id="CHEBI:18248"/>
    </ligandPart>
</feature>
<feature type="binding site" evidence="2">
    <location>
        <position position="202"/>
    </location>
    <ligand>
        <name>a ubiquinone</name>
        <dbReference type="ChEBI" id="CHEBI:16389"/>
    </ligand>
</feature>
<evidence type="ECO:0000250" key="1"/>
<evidence type="ECO:0000250" key="2">
    <source>
        <dbReference type="UniProtKB" id="P00157"/>
    </source>
</evidence>
<evidence type="ECO:0000250" key="3">
    <source>
        <dbReference type="UniProtKB" id="P00163"/>
    </source>
</evidence>
<evidence type="ECO:0000255" key="4">
    <source>
        <dbReference type="PROSITE-ProRule" id="PRU00967"/>
    </source>
</evidence>
<evidence type="ECO:0000255" key="5">
    <source>
        <dbReference type="PROSITE-ProRule" id="PRU00968"/>
    </source>
</evidence>
<proteinExistence type="inferred from homology"/>
<geneLocation type="mitochondrion"/>
<gene>
    <name type="primary">MT-CYB</name>
    <name type="synonym">COB</name>
    <name type="synonym">CYTB</name>
    <name type="synonym">MTCYB</name>
</gene>
<reference key="1">
    <citation type="journal article" date="1990" name="Arch. Insect Biochem. Physiol.">
        <title>Cloning of the mitochondrial genome of Anopheles quadrimaculatus.</title>
        <authorList>
            <person name="Cockburn A.F."/>
            <person name="Mitchell S.E."/>
            <person name="Seawright J.A."/>
        </authorList>
    </citation>
    <scope>NUCLEOTIDE SEQUENCE [GENOMIC DNA]</scope>
    <source>
        <strain>Orlando</strain>
    </source>
</reference>
<dbReference type="EMBL" id="L04272">
    <property type="protein sequence ID" value="AAA93551.1"/>
    <property type="molecule type" value="Genomic_DNA"/>
</dbReference>
<dbReference type="SMR" id="P33501"/>
<dbReference type="GO" id="GO:0005743">
    <property type="term" value="C:mitochondrial inner membrane"/>
    <property type="evidence" value="ECO:0007669"/>
    <property type="project" value="UniProtKB-SubCell"/>
</dbReference>
<dbReference type="GO" id="GO:0045275">
    <property type="term" value="C:respiratory chain complex III"/>
    <property type="evidence" value="ECO:0007669"/>
    <property type="project" value="InterPro"/>
</dbReference>
<dbReference type="GO" id="GO:0046872">
    <property type="term" value="F:metal ion binding"/>
    <property type="evidence" value="ECO:0007669"/>
    <property type="project" value="UniProtKB-KW"/>
</dbReference>
<dbReference type="GO" id="GO:0008121">
    <property type="term" value="F:ubiquinol-cytochrome-c reductase activity"/>
    <property type="evidence" value="ECO:0007669"/>
    <property type="project" value="InterPro"/>
</dbReference>
<dbReference type="GO" id="GO:0006122">
    <property type="term" value="P:mitochondrial electron transport, ubiquinol to cytochrome c"/>
    <property type="evidence" value="ECO:0007669"/>
    <property type="project" value="TreeGrafter"/>
</dbReference>
<dbReference type="CDD" id="cd00290">
    <property type="entry name" value="cytochrome_b_C"/>
    <property type="match status" value="1"/>
</dbReference>
<dbReference type="CDD" id="cd00284">
    <property type="entry name" value="Cytochrome_b_N"/>
    <property type="match status" value="1"/>
</dbReference>
<dbReference type="FunFam" id="1.20.810.10:FF:000002">
    <property type="entry name" value="Cytochrome b"/>
    <property type="match status" value="1"/>
</dbReference>
<dbReference type="Gene3D" id="1.20.810.10">
    <property type="entry name" value="Cytochrome Bc1 Complex, Chain C"/>
    <property type="match status" value="1"/>
</dbReference>
<dbReference type="InterPro" id="IPR005798">
    <property type="entry name" value="Cyt_b/b6_C"/>
</dbReference>
<dbReference type="InterPro" id="IPR036150">
    <property type="entry name" value="Cyt_b/b6_C_sf"/>
</dbReference>
<dbReference type="InterPro" id="IPR005797">
    <property type="entry name" value="Cyt_b/b6_N"/>
</dbReference>
<dbReference type="InterPro" id="IPR027387">
    <property type="entry name" value="Cytb/b6-like_sf"/>
</dbReference>
<dbReference type="InterPro" id="IPR030689">
    <property type="entry name" value="Cytochrome_b"/>
</dbReference>
<dbReference type="InterPro" id="IPR048260">
    <property type="entry name" value="Cytochrome_b_C_euk/bac"/>
</dbReference>
<dbReference type="InterPro" id="IPR048259">
    <property type="entry name" value="Cytochrome_b_N_euk/bac"/>
</dbReference>
<dbReference type="InterPro" id="IPR016174">
    <property type="entry name" value="Di-haem_cyt_TM"/>
</dbReference>
<dbReference type="PANTHER" id="PTHR19271">
    <property type="entry name" value="CYTOCHROME B"/>
    <property type="match status" value="1"/>
</dbReference>
<dbReference type="PANTHER" id="PTHR19271:SF16">
    <property type="entry name" value="CYTOCHROME B"/>
    <property type="match status" value="1"/>
</dbReference>
<dbReference type="Pfam" id="PF00032">
    <property type="entry name" value="Cytochrom_B_C"/>
    <property type="match status" value="1"/>
</dbReference>
<dbReference type="Pfam" id="PF00033">
    <property type="entry name" value="Cytochrome_B"/>
    <property type="match status" value="1"/>
</dbReference>
<dbReference type="PIRSF" id="PIRSF038885">
    <property type="entry name" value="COB"/>
    <property type="match status" value="1"/>
</dbReference>
<dbReference type="SUPFAM" id="SSF81648">
    <property type="entry name" value="a domain/subunit of cytochrome bc1 complex (Ubiquinol-cytochrome c reductase)"/>
    <property type="match status" value="1"/>
</dbReference>
<dbReference type="SUPFAM" id="SSF81342">
    <property type="entry name" value="Transmembrane di-heme cytochromes"/>
    <property type="match status" value="1"/>
</dbReference>
<dbReference type="PROSITE" id="PS51003">
    <property type="entry name" value="CYTB_CTER"/>
    <property type="match status" value="1"/>
</dbReference>
<dbReference type="PROSITE" id="PS51002">
    <property type="entry name" value="CYTB_NTER"/>
    <property type="match status" value="1"/>
</dbReference>
<sequence length="378" mass="43536">MFKPIRKTHPLISIANNALVDLPAPSNISAWWNFGSLLGLCLMLQILTGLFLAMHYAADIETAFNSVNHICRDVNNGWFLRICHANGASFFFACLFMHVGRGVYYESYLYHMTWNTGVIILFLTMATGFLGYVLPWGQMSFWGATVITNLLSAVPYLGMDLVQWIWGGFAVDNTTLTRFFTFHFIFPFIILALMMIHLLFLHQTGSNNPLGLNSNVDKIPFHPYFIYKDIFGFIVFYWILIRFIWKFNYLLMDPENFIPANPLVTPVHIQPEWYFLFAYAILRSIPNKLGGVIALVLSIAILLILPFTHSSKFRGLQFYPLNQILFWNMVVVASLLTWIGARPVEDPYVLTGQILTVLYFSYFIINPLLAKYWDKLLN</sequence>
<protein>
    <recommendedName>
        <fullName>Cytochrome b</fullName>
    </recommendedName>
    <alternativeName>
        <fullName>Complex III subunit 3</fullName>
    </alternativeName>
    <alternativeName>
        <fullName>Complex III subunit III</fullName>
    </alternativeName>
    <alternativeName>
        <fullName>Cytochrome b-c1 complex subunit 3</fullName>
    </alternativeName>
    <alternativeName>
        <fullName>Ubiquinol-cytochrome-c reductase complex cytochrome b subunit</fullName>
    </alternativeName>
</protein>
<organism>
    <name type="scientific">Anopheles quadrimaculatus</name>
    <name type="common">Common malaria mosquito</name>
    <dbReference type="NCBI Taxonomy" id="7166"/>
    <lineage>
        <taxon>Eukaryota</taxon>
        <taxon>Metazoa</taxon>
        <taxon>Ecdysozoa</taxon>
        <taxon>Arthropoda</taxon>
        <taxon>Hexapoda</taxon>
        <taxon>Insecta</taxon>
        <taxon>Pterygota</taxon>
        <taxon>Neoptera</taxon>
        <taxon>Endopterygota</taxon>
        <taxon>Diptera</taxon>
        <taxon>Nematocera</taxon>
        <taxon>Culicoidea</taxon>
        <taxon>Culicidae</taxon>
        <taxon>Anophelinae</taxon>
        <taxon>Anopheles</taxon>
    </lineage>
</organism>
<comment type="function">
    <text evidence="2">Component of the ubiquinol-cytochrome c reductase complex (complex III or cytochrome b-c1 complex) that is part of the mitochondrial respiratory chain. The b-c1 complex mediates electron transfer from ubiquinol to cytochrome c. Contributes to the generation of a proton gradient across the mitochondrial membrane that is then used for ATP synthesis.</text>
</comment>
<comment type="cofactor">
    <cofactor evidence="2">
        <name>heme b</name>
        <dbReference type="ChEBI" id="CHEBI:60344"/>
    </cofactor>
    <text evidence="2">Binds 2 heme b groups non-covalently.</text>
</comment>
<comment type="subunit">
    <text evidence="2">The main subunits of complex b-c1 are: cytochrome b, cytochrome c1 and the Rieske protein.</text>
</comment>
<comment type="subcellular location">
    <subcellularLocation>
        <location evidence="3">Mitochondrion inner membrane</location>
        <topology evidence="3">Multi-pass membrane protein</topology>
    </subcellularLocation>
</comment>
<comment type="miscellaneous">
    <text evidence="1">Heme 1 (or BL or b562) is low-potential and absorbs at about 562 nm, and heme 2 (or BH or b566) is high-potential and absorbs at about 566 nm.</text>
</comment>
<comment type="similarity">
    <text evidence="4 5">Belongs to the cytochrome b family.</text>
</comment>
<comment type="caution">
    <text evidence="2">The full-length protein contains only eight transmembrane helices, not nine as predicted by bioinformatics tools.</text>
</comment>
<accession>P33501</accession>
<keyword id="KW-0249">Electron transport</keyword>
<keyword id="KW-0349">Heme</keyword>
<keyword id="KW-0408">Iron</keyword>
<keyword id="KW-0472">Membrane</keyword>
<keyword id="KW-0479">Metal-binding</keyword>
<keyword id="KW-0496">Mitochondrion</keyword>
<keyword id="KW-0999">Mitochondrion inner membrane</keyword>
<keyword id="KW-0679">Respiratory chain</keyword>
<keyword id="KW-0812">Transmembrane</keyword>
<keyword id="KW-1133">Transmembrane helix</keyword>
<keyword id="KW-0813">Transport</keyword>
<keyword id="KW-0830">Ubiquinone</keyword>